<organism>
    <name type="scientific">Escherichia coli O81 (strain ED1a)</name>
    <dbReference type="NCBI Taxonomy" id="585397"/>
    <lineage>
        <taxon>Bacteria</taxon>
        <taxon>Pseudomonadati</taxon>
        <taxon>Pseudomonadota</taxon>
        <taxon>Gammaproteobacteria</taxon>
        <taxon>Enterobacterales</taxon>
        <taxon>Enterobacteriaceae</taxon>
        <taxon>Escherichia</taxon>
    </lineage>
</organism>
<name>MTLD_ECO81</name>
<proteinExistence type="inferred from homology"/>
<dbReference type="EC" id="1.1.1.17" evidence="1"/>
<dbReference type="EMBL" id="CU928162">
    <property type="protein sequence ID" value="CAR10413.2"/>
    <property type="molecule type" value="Genomic_DNA"/>
</dbReference>
<dbReference type="RefSeq" id="WP_000645420.1">
    <property type="nucleotide sequence ID" value="NC_011745.1"/>
</dbReference>
<dbReference type="SMR" id="B7N242"/>
<dbReference type="KEGG" id="ecq:ECED1_4282"/>
<dbReference type="HOGENOM" id="CLU_036089_2_0_6"/>
<dbReference type="Proteomes" id="UP000000748">
    <property type="component" value="Chromosome"/>
</dbReference>
<dbReference type="GO" id="GO:0005829">
    <property type="term" value="C:cytosol"/>
    <property type="evidence" value="ECO:0007669"/>
    <property type="project" value="TreeGrafter"/>
</dbReference>
<dbReference type="GO" id="GO:0008926">
    <property type="term" value="F:mannitol-1-phosphate 5-dehydrogenase activity"/>
    <property type="evidence" value="ECO:0007669"/>
    <property type="project" value="UniProtKB-UniRule"/>
</dbReference>
<dbReference type="GO" id="GO:0019592">
    <property type="term" value="P:mannitol catabolic process"/>
    <property type="evidence" value="ECO:0007669"/>
    <property type="project" value="TreeGrafter"/>
</dbReference>
<dbReference type="FunFam" id="1.10.1040.10:FF:000009">
    <property type="entry name" value="Mannitol-1-phosphate 5-dehydrogenase"/>
    <property type="match status" value="1"/>
</dbReference>
<dbReference type="FunFam" id="3.40.50.720:FF:000075">
    <property type="entry name" value="Mannitol-1-phosphate 5-dehydrogenase"/>
    <property type="match status" value="1"/>
</dbReference>
<dbReference type="Gene3D" id="1.10.1040.10">
    <property type="entry name" value="N-(1-d-carboxylethyl)-l-norvaline Dehydrogenase, domain 2"/>
    <property type="match status" value="1"/>
</dbReference>
<dbReference type="Gene3D" id="3.40.50.720">
    <property type="entry name" value="NAD(P)-binding Rossmann-like Domain"/>
    <property type="match status" value="1"/>
</dbReference>
<dbReference type="HAMAP" id="MF_00196">
    <property type="entry name" value="Mannitol_dehydrog"/>
    <property type="match status" value="1"/>
</dbReference>
<dbReference type="InterPro" id="IPR008927">
    <property type="entry name" value="6-PGluconate_DH-like_C_sf"/>
</dbReference>
<dbReference type="InterPro" id="IPR013328">
    <property type="entry name" value="6PGD_dom2"/>
</dbReference>
<dbReference type="InterPro" id="IPR023028">
    <property type="entry name" value="Mannitol_1_phos_5_DH"/>
</dbReference>
<dbReference type="InterPro" id="IPR000669">
    <property type="entry name" value="Mannitol_DH"/>
</dbReference>
<dbReference type="InterPro" id="IPR013118">
    <property type="entry name" value="Mannitol_DH_C"/>
</dbReference>
<dbReference type="InterPro" id="IPR023027">
    <property type="entry name" value="Mannitol_DH_CS"/>
</dbReference>
<dbReference type="InterPro" id="IPR013131">
    <property type="entry name" value="Mannitol_DH_N"/>
</dbReference>
<dbReference type="InterPro" id="IPR036291">
    <property type="entry name" value="NAD(P)-bd_dom_sf"/>
</dbReference>
<dbReference type="NCBIfam" id="NF002646">
    <property type="entry name" value="PRK02318.1-2"/>
    <property type="match status" value="1"/>
</dbReference>
<dbReference type="NCBIfam" id="NF002647">
    <property type="entry name" value="PRK02318.1-3"/>
    <property type="match status" value="1"/>
</dbReference>
<dbReference type="NCBIfam" id="NF002648">
    <property type="entry name" value="PRK02318.1-4"/>
    <property type="match status" value="1"/>
</dbReference>
<dbReference type="NCBIfam" id="NF002650">
    <property type="entry name" value="PRK02318.2-2"/>
    <property type="match status" value="1"/>
</dbReference>
<dbReference type="NCBIfam" id="NF002652">
    <property type="entry name" value="PRK02318.2-5"/>
    <property type="match status" value="1"/>
</dbReference>
<dbReference type="PANTHER" id="PTHR30524:SF0">
    <property type="entry name" value="ALTRONATE OXIDOREDUCTASE-RELATED"/>
    <property type="match status" value="1"/>
</dbReference>
<dbReference type="PANTHER" id="PTHR30524">
    <property type="entry name" value="MANNITOL-1-PHOSPHATE 5-DEHYDROGENASE"/>
    <property type="match status" value="1"/>
</dbReference>
<dbReference type="Pfam" id="PF01232">
    <property type="entry name" value="Mannitol_dh"/>
    <property type="match status" value="1"/>
</dbReference>
<dbReference type="Pfam" id="PF08125">
    <property type="entry name" value="Mannitol_dh_C"/>
    <property type="match status" value="1"/>
</dbReference>
<dbReference type="PRINTS" id="PR00084">
    <property type="entry name" value="MTLDHDRGNASE"/>
</dbReference>
<dbReference type="SUPFAM" id="SSF48179">
    <property type="entry name" value="6-phosphogluconate dehydrogenase C-terminal domain-like"/>
    <property type="match status" value="1"/>
</dbReference>
<dbReference type="SUPFAM" id="SSF51735">
    <property type="entry name" value="NAD(P)-binding Rossmann-fold domains"/>
    <property type="match status" value="1"/>
</dbReference>
<dbReference type="PROSITE" id="PS00974">
    <property type="entry name" value="MANNITOL_DHGENASE"/>
    <property type="match status" value="1"/>
</dbReference>
<evidence type="ECO:0000255" key="1">
    <source>
        <dbReference type="HAMAP-Rule" id="MF_00196"/>
    </source>
</evidence>
<gene>
    <name evidence="1" type="primary">mtlD</name>
    <name type="ordered locus">ECED1_4282</name>
</gene>
<sequence length="382" mass="41124">MKALHFGAGNIGRGFIGKLLADAGIQLTFADVNQVVLDALNARHSYQVHVVGETEQVDTVSGVNAVSSIGDDVVDLIAQVDLVTTAVGPVVLERIAPAIAKGLVKRKEQGNESPLNIIACENMVRGTTQLKGHVMNALPEDAKAWVEEHVGFVDSAVDRIVPPSASATNDPLEVTVETFSEWIVDKTQFKGALPNIPGMELTDNLMAFVERKLFTLNTGHAITAYLGKLAGHQTIRDAILDEKIRAVVKGAMEESGAVLIKRYGFDADKHAAYIQKILGRFENPYLKDDVERVGRQPLRKLSAGDRLIKPLLGTLEYGLPHKNLIEGIAAAMHFRSEDDPQAQELAALIADKGPQAALAQISGLDANSEVVSEAVTAYKAMQ</sequence>
<comment type="catalytic activity">
    <reaction evidence="1">
        <text>D-mannitol 1-phosphate + NAD(+) = beta-D-fructose 6-phosphate + NADH + H(+)</text>
        <dbReference type="Rhea" id="RHEA:19661"/>
        <dbReference type="ChEBI" id="CHEBI:15378"/>
        <dbReference type="ChEBI" id="CHEBI:57540"/>
        <dbReference type="ChEBI" id="CHEBI:57634"/>
        <dbReference type="ChEBI" id="CHEBI:57945"/>
        <dbReference type="ChEBI" id="CHEBI:61381"/>
        <dbReference type="EC" id="1.1.1.17"/>
    </reaction>
</comment>
<comment type="similarity">
    <text evidence="1">Belongs to the mannitol dehydrogenase family.</text>
</comment>
<protein>
    <recommendedName>
        <fullName evidence="1">Mannitol-1-phosphate 5-dehydrogenase</fullName>
        <ecNumber evidence="1">1.1.1.17</ecNumber>
    </recommendedName>
</protein>
<feature type="chain" id="PRO_1000124389" description="Mannitol-1-phosphate 5-dehydrogenase">
    <location>
        <begin position="1"/>
        <end position="382"/>
    </location>
</feature>
<feature type="binding site" evidence="1">
    <location>
        <begin position="3"/>
        <end position="14"/>
    </location>
    <ligand>
        <name>NAD(+)</name>
        <dbReference type="ChEBI" id="CHEBI:57540"/>
    </ligand>
</feature>
<feature type="modified residue" description="N6-acetyllysine" evidence="1">
    <location>
        <position position="269"/>
    </location>
</feature>
<reference key="1">
    <citation type="journal article" date="2009" name="PLoS Genet.">
        <title>Organised genome dynamics in the Escherichia coli species results in highly diverse adaptive paths.</title>
        <authorList>
            <person name="Touchon M."/>
            <person name="Hoede C."/>
            <person name="Tenaillon O."/>
            <person name="Barbe V."/>
            <person name="Baeriswyl S."/>
            <person name="Bidet P."/>
            <person name="Bingen E."/>
            <person name="Bonacorsi S."/>
            <person name="Bouchier C."/>
            <person name="Bouvet O."/>
            <person name="Calteau A."/>
            <person name="Chiapello H."/>
            <person name="Clermont O."/>
            <person name="Cruveiller S."/>
            <person name="Danchin A."/>
            <person name="Diard M."/>
            <person name="Dossat C."/>
            <person name="Karoui M.E."/>
            <person name="Frapy E."/>
            <person name="Garry L."/>
            <person name="Ghigo J.M."/>
            <person name="Gilles A.M."/>
            <person name="Johnson J."/>
            <person name="Le Bouguenec C."/>
            <person name="Lescat M."/>
            <person name="Mangenot S."/>
            <person name="Martinez-Jehanne V."/>
            <person name="Matic I."/>
            <person name="Nassif X."/>
            <person name="Oztas S."/>
            <person name="Petit M.A."/>
            <person name="Pichon C."/>
            <person name="Rouy Z."/>
            <person name="Ruf C.S."/>
            <person name="Schneider D."/>
            <person name="Tourret J."/>
            <person name="Vacherie B."/>
            <person name="Vallenet D."/>
            <person name="Medigue C."/>
            <person name="Rocha E.P.C."/>
            <person name="Denamur E."/>
        </authorList>
    </citation>
    <scope>NUCLEOTIDE SEQUENCE [LARGE SCALE GENOMIC DNA]</scope>
    <source>
        <strain>ED1a</strain>
    </source>
</reference>
<keyword id="KW-0007">Acetylation</keyword>
<keyword id="KW-0520">NAD</keyword>
<keyword id="KW-0560">Oxidoreductase</keyword>
<accession>B7N242</accession>